<gene>
    <name evidence="1" type="primary">rplJ</name>
    <name type="ordered locus">LCA_1667</name>
</gene>
<keyword id="KW-1185">Reference proteome</keyword>
<keyword id="KW-0687">Ribonucleoprotein</keyword>
<keyword id="KW-0689">Ribosomal protein</keyword>
<keyword id="KW-0694">RNA-binding</keyword>
<keyword id="KW-0699">rRNA-binding</keyword>
<protein>
    <recommendedName>
        <fullName evidence="1">Large ribosomal subunit protein uL10</fullName>
    </recommendedName>
    <alternativeName>
        <fullName evidence="2">50S ribosomal protein L10</fullName>
    </alternativeName>
</protein>
<comment type="function">
    <text evidence="1">Forms part of the ribosomal stalk, playing a central role in the interaction of the ribosome with GTP-bound translation factors.</text>
</comment>
<comment type="subunit">
    <text evidence="1">Part of the ribosomal stalk of the 50S ribosomal subunit. The N-terminus interacts with L11 and the large rRNA to form the base of the stalk. The C-terminus forms an elongated spine to which L12 dimers bind in a sequential fashion forming a multimeric L10(L12)X complex.</text>
</comment>
<comment type="similarity">
    <text evidence="1">Belongs to the universal ribosomal protein uL10 family.</text>
</comment>
<reference key="1">
    <citation type="journal article" date="2005" name="Nat. Biotechnol.">
        <title>The complete genome sequence of the meat-borne lactic acid bacterium Lactobacillus sakei 23K.</title>
        <authorList>
            <person name="Chaillou S."/>
            <person name="Champomier-Verges M.-C."/>
            <person name="Cornet M."/>
            <person name="Crutz-Le Coq A.-M."/>
            <person name="Dudez A.-M."/>
            <person name="Martin V."/>
            <person name="Beaufils S."/>
            <person name="Darbon-Rongere E."/>
            <person name="Bossy R."/>
            <person name="Loux V."/>
            <person name="Zagorec M."/>
        </authorList>
    </citation>
    <scope>NUCLEOTIDE SEQUENCE [LARGE SCALE GENOMIC DNA]</scope>
    <source>
        <strain>23K</strain>
    </source>
</reference>
<organism>
    <name type="scientific">Latilactobacillus sakei subsp. sakei (strain 23K)</name>
    <name type="common">Lactobacillus sakei subsp. sakei</name>
    <dbReference type="NCBI Taxonomy" id="314315"/>
    <lineage>
        <taxon>Bacteria</taxon>
        <taxon>Bacillati</taxon>
        <taxon>Bacillota</taxon>
        <taxon>Bacilli</taxon>
        <taxon>Lactobacillales</taxon>
        <taxon>Lactobacillaceae</taxon>
        <taxon>Latilactobacillus</taxon>
    </lineage>
</organism>
<accession>Q38V10</accession>
<feature type="chain" id="PRO_0000234855" description="Large ribosomal subunit protein uL10">
    <location>
        <begin position="1"/>
        <end position="167"/>
    </location>
</feature>
<name>RL10_LATSS</name>
<proteinExistence type="inferred from homology"/>
<dbReference type="EMBL" id="CR936503">
    <property type="protein sequence ID" value="CAI55974.1"/>
    <property type="molecule type" value="Genomic_DNA"/>
</dbReference>
<dbReference type="RefSeq" id="WP_011375359.1">
    <property type="nucleotide sequence ID" value="NC_007576.1"/>
</dbReference>
<dbReference type="SMR" id="Q38V10"/>
<dbReference type="STRING" id="314315.LCA_1667"/>
<dbReference type="KEGG" id="lsa:LCA_1667"/>
<dbReference type="eggNOG" id="COG0244">
    <property type="taxonomic scope" value="Bacteria"/>
</dbReference>
<dbReference type="HOGENOM" id="CLU_092227_2_0_9"/>
<dbReference type="OrthoDB" id="9808307at2"/>
<dbReference type="Proteomes" id="UP000002707">
    <property type="component" value="Chromosome"/>
</dbReference>
<dbReference type="GO" id="GO:0015934">
    <property type="term" value="C:large ribosomal subunit"/>
    <property type="evidence" value="ECO:0007669"/>
    <property type="project" value="InterPro"/>
</dbReference>
<dbReference type="GO" id="GO:0070180">
    <property type="term" value="F:large ribosomal subunit rRNA binding"/>
    <property type="evidence" value="ECO:0007669"/>
    <property type="project" value="UniProtKB-UniRule"/>
</dbReference>
<dbReference type="GO" id="GO:0003735">
    <property type="term" value="F:structural constituent of ribosome"/>
    <property type="evidence" value="ECO:0007669"/>
    <property type="project" value="InterPro"/>
</dbReference>
<dbReference type="GO" id="GO:0006412">
    <property type="term" value="P:translation"/>
    <property type="evidence" value="ECO:0007669"/>
    <property type="project" value="UniProtKB-UniRule"/>
</dbReference>
<dbReference type="CDD" id="cd05797">
    <property type="entry name" value="Ribosomal_L10"/>
    <property type="match status" value="1"/>
</dbReference>
<dbReference type="FunFam" id="3.30.70.1730:FF:000001">
    <property type="entry name" value="50S ribosomal protein L10"/>
    <property type="match status" value="1"/>
</dbReference>
<dbReference type="Gene3D" id="3.30.70.1730">
    <property type="match status" value="1"/>
</dbReference>
<dbReference type="Gene3D" id="6.10.250.290">
    <property type="match status" value="1"/>
</dbReference>
<dbReference type="HAMAP" id="MF_00362">
    <property type="entry name" value="Ribosomal_uL10"/>
    <property type="match status" value="1"/>
</dbReference>
<dbReference type="InterPro" id="IPR001790">
    <property type="entry name" value="Ribosomal_uL10"/>
</dbReference>
<dbReference type="InterPro" id="IPR043141">
    <property type="entry name" value="Ribosomal_uL10-like_sf"/>
</dbReference>
<dbReference type="InterPro" id="IPR022973">
    <property type="entry name" value="Ribosomal_uL10_bac"/>
</dbReference>
<dbReference type="InterPro" id="IPR047865">
    <property type="entry name" value="Ribosomal_uL10_bac_type"/>
</dbReference>
<dbReference type="InterPro" id="IPR002363">
    <property type="entry name" value="Ribosomal_uL10_CS_bac"/>
</dbReference>
<dbReference type="NCBIfam" id="NF000955">
    <property type="entry name" value="PRK00099.1-1"/>
    <property type="match status" value="1"/>
</dbReference>
<dbReference type="PANTHER" id="PTHR11560">
    <property type="entry name" value="39S RIBOSOMAL PROTEIN L10, MITOCHONDRIAL"/>
    <property type="match status" value="1"/>
</dbReference>
<dbReference type="Pfam" id="PF00466">
    <property type="entry name" value="Ribosomal_L10"/>
    <property type="match status" value="1"/>
</dbReference>
<dbReference type="SUPFAM" id="SSF160369">
    <property type="entry name" value="Ribosomal protein L10-like"/>
    <property type="match status" value="1"/>
</dbReference>
<dbReference type="PROSITE" id="PS01109">
    <property type="entry name" value="RIBOSOMAL_L10"/>
    <property type="match status" value="1"/>
</dbReference>
<evidence type="ECO:0000255" key="1">
    <source>
        <dbReference type="HAMAP-Rule" id="MF_00362"/>
    </source>
</evidence>
<evidence type="ECO:0000305" key="2"/>
<sequence>MSETIIAKKAQIVDTVVEKFNNAVSIVVMDYRGLTVEQVTELRKQLREAGVQMEVVKNTYLRRAADKAGYEGLDDTFTGPTAVAFSNEDVVAPAKIIANFSKSADALEIKGGMIEGKVATLDEINALATLPSRDGLLSMLLSVLQAPVRNVAYAVKAVADSKDEPAA</sequence>